<protein>
    <recommendedName>
        <fullName evidence="2">Large ribosomal subunit protein uL1</fullName>
    </recommendedName>
    <alternativeName>
        <fullName evidence="3">50S ribosomal protein L1</fullName>
    </alternativeName>
</protein>
<feature type="initiator methionine" description="Removed" evidence="1">
    <location>
        <position position="1"/>
    </location>
</feature>
<feature type="chain" id="PRO_0000125665" description="Large ribosomal subunit protein uL1">
    <location>
        <begin position="2"/>
        <end position="229"/>
    </location>
</feature>
<dbReference type="EMBL" id="L42023">
    <property type="protein sequence ID" value="AAC22174.1"/>
    <property type="molecule type" value="Genomic_DNA"/>
</dbReference>
<dbReference type="PIR" id="I64073">
    <property type="entry name" value="I64073"/>
</dbReference>
<dbReference type="RefSeq" id="NP_438674.1">
    <property type="nucleotide sequence ID" value="NC_000907.1"/>
</dbReference>
<dbReference type="SMR" id="P44342"/>
<dbReference type="STRING" id="71421.HI_0516"/>
<dbReference type="EnsemblBacteria" id="AAC22174">
    <property type="protein sequence ID" value="AAC22174"/>
    <property type="gene ID" value="HI_0516"/>
</dbReference>
<dbReference type="KEGG" id="hin:HI_0516"/>
<dbReference type="PATRIC" id="fig|71421.8.peg.535"/>
<dbReference type="eggNOG" id="COG0081">
    <property type="taxonomic scope" value="Bacteria"/>
</dbReference>
<dbReference type="HOGENOM" id="CLU_062853_0_0_6"/>
<dbReference type="OrthoDB" id="9803740at2"/>
<dbReference type="PhylomeDB" id="P44342"/>
<dbReference type="BioCyc" id="HINF71421:G1GJ1-529-MONOMER"/>
<dbReference type="Proteomes" id="UP000000579">
    <property type="component" value="Chromosome"/>
</dbReference>
<dbReference type="GO" id="GO:0022625">
    <property type="term" value="C:cytosolic large ribosomal subunit"/>
    <property type="evidence" value="ECO:0000318"/>
    <property type="project" value="GO_Central"/>
</dbReference>
<dbReference type="GO" id="GO:0019843">
    <property type="term" value="F:rRNA binding"/>
    <property type="evidence" value="ECO:0007669"/>
    <property type="project" value="UniProtKB-UniRule"/>
</dbReference>
<dbReference type="GO" id="GO:0003735">
    <property type="term" value="F:structural constituent of ribosome"/>
    <property type="evidence" value="ECO:0007669"/>
    <property type="project" value="InterPro"/>
</dbReference>
<dbReference type="GO" id="GO:0000049">
    <property type="term" value="F:tRNA binding"/>
    <property type="evidence" value="ECO:0007669"/>
    <property type="project" value="UniProtKB-KW"/>
</dbReference>
<dbReference type="GO" id="GO:0006417">
    <property type="term" value="P:regulation of translation"/>
    <property type="evidence" value="ECO:0007669"/>
    <property type="project" value="UniProtKB-KW"/>
</dbReference>
<dbReference type="GO" id="GO:0006412">
    <property type="term" value="P:translation"/>
    <property type="evidence" value="ECO:0007669"/>
    <property type="project" value="UniProtKB-UniRule"/>
</dbReference>
<dbReference type="CDD" id="cd00403">
    <property type="entry name" value="Ribosomal_L1"/>
    <property type="match status" value="1"/>
</dbReference>
<dbReference type="FunFam" id="3.40.50.790:FF:000001">
    <property type="entry name" value="50S ribosomal protein L1"/>
    <property type="match status" value="1"/>
</dbReference>
<dbReference type="Gene3D" id="3.30.190.20">
    <property type="match status" value="1"/>
</dbReference>
<dbReference type="Gene3D" id="3.40.50.790">
    <property type="match status" value="1"/>
</dbReference>
<dbReference type="HAMAP" id="MF_01318_B">
    <property type="entry name" value="Ribosomal_uL1_B"/>
    <property type="match status" value="1"/>
</dbReference>
<dbReference type="InterPro" id="IPR005878">
    <property type="entry name" value="Ribosom_uL1_bac-type"/>
</dbReference>
<dbReference type="InterPro" id="IPR002143">
    <property type="entry name" value="Ribosomal_uL1"/>
</dbReference>
<dbReference type="InterPro" id="IPR023674">
    <property type="entry name" value="Ribosomal_uL1-like"/>
</dbReference>
<dbReference type="InterPro" id="IPR028364">
    <property type="entry name" value="Ribosomal_uL1/biogenesis"/>
</dbReference>
<dbReference type="InterPro" id="IPR016095">
    <property type="entry name" value="Ribosomal_uL1_3-a/b-sand"/>
</dbReference>
<dbReference type="InterPro" id="IPR023673">
    <property type="entry name" value="Ribosomal_uL1_CS"/>
</dbReference>
<dbReference type="NCBIfam" id="TIGR01169">
    <property type="entry name" value="rplA_bact"/>
    <property type="match status" value="1"/>
</dbReference>
<dbReference type="PANTHER" id="PTHR36427">
    <property type="entry name" value="54S RIBOSOMAL PROTEIN L1, MITOCHONDRIAL"/>
    <property type="match status" value="1"/>
</dbReference>
<dbReference type="PANTHER" id="PTHR36427:SF3">
    <property type="entry name" value="LARGE RIBOSOMAL SUBUNIT PROTEIN UL1M"/>
    <property type="match status" value="1"/>
</dbReference>
<dbReference type="Pfam" id="PF00687">
    <property type="entry name" value="Ribosomal_L1"/>
    <property type="match status" value="1"/>
</dbReference>
<dbReference type="PIRSF" id="PIRSF002155">
    <property type="entry name" value="Ribosomal_L1"/>
    <property type="match status" value="1"/>
</dbReference>
<dbReference type="SUPFAM" id="SSF56808">
    <property type="entry name" value="Ribosomal protein L1"/>
    <property type="match status" value="1"/>
</dbReference>
<dbReference type="PROSITE" id="PS01199">
    <property type="entry name" value="RIBOSOMAL_L1"/>
    <property type="match status" value="1"/>
</dbReference>
<keyword id="KW-1185">Reference proteome</keyword>
<keyword id="KW-0678">Repressor</keyword>
<keyword id="KW-0687">Ribonucleoprotein</keyword>
<keyword id="KW-0689">Ribosomal protein</keyword>
<keyword id="KW-0694">RNA-binding</keyword>
<keyword id="KW-0699">rRNA-binding</keyword>
<keyword id="KW-0810">Translation regulation</keyword>
<keyword id="KW-0820">tRNA-binding</keyword>
<proteinExistence type="inferred from homology"/>
<comment type="function">
    <text evidence="2">Binds directly to 23S rRNA. The L1 stalk is quite mobile in the ribosome, and is involved in E site tRNA release.</text>
</comment>
<comment type="function">
    <text evidence="2">Protein L1 is also a translational repressor protein, it controls the translation of the L11 operon by binding to its mRNA.</text>
</comment>
<comment type="subunit">
    <text evidence="2">Part of the 50S ribosomal subunit.</text>
</comment>
<comment type="similarity">
    <text evidence="2">Belongs to the universal ribosomal protein uL1 family.</text>
</comment>
<accession>P44342</accession>
<sequence>MAKLTKKMKAIKAGVDSTKAYEINEAIAVLKQFATAKFVESVDVAVNLGIDPRKSDQNVRGATVLPHGTGREVRVAVFTQGANADAAKEAGADLVGMEDLAEQIKKGEMNFDVVIASPDAMRVVGQLGQVLGPRGLMPNPKVGTVTPNVAEAVKNAKSGQIRYRNDKNGIIHTTIGKANFSEVQLKENLQALLAALNKAKPTTAKGIFIKKVSISTTMGAGVAVDQASL</sequence>
<reference key="1">
    <citation type="journal article" date="1995" name="Science">
        <title>Whole-genome random sequencing and assembly of Haemophilus influenzae Rd.</title>
        <authorList>
            <person name="Fleischmann R.D."/>
            <person name="Adams M.D."/>
            <person name="White O."/>
            <person name="Clayton R.A."/>
            <person name="Kirkness E.F."/>
            <person name="Kerlavage A.R."/>
            <person name="Bult C.J."/>
            <person name="Tomb J.-F."/>
            <person name="Dougherty B.A."/>
            <person name="Merrick J.M."/>
            <person name="McKenney K."/>
            <person name="Sutton G.G."/>
            <person name="FitzHugh W."/>
            <person name="Fields C.A."/>
            <person name="Gocayne J.D."/>
            <person name="Scott J.D."/>
            <person name="Shirley R."/>
            <person name="Liu L.-I."/>
            <person name="Glodek A."/>
            <person name="Kelley J.M."/>
            <person name="Weidman J.F."/>
            <person name="Phillips C.A."/>
            <person name="Spriggs T."/>
            <person name="Hedblom E."/>
            <person name="Cotton M.D."/>
            <person name="Utterback T.R."/>
            <person name="Hanna M.C."/>
            <person name="Nguyen D.T."/>
            <person name="Saudek D.M."/>
            <person name="Brandon R.C."/>
            <person name="Fine L.D."/>
            <person name="Fritchman J.L."/>
            <person name="Fuhrmann J.L."/>
            <person name="Geoghagen N.S.M."/>
            <person name="Gnehm C.L."/>
            <person name="McDonald L.A."/>
            <person name="Small K.V."/>
            <person name="Fraser C.M."/>
            <person name="Smith H.O."/>
            <person name="Venter J.C."/>
        </authorList>
    </citation>
    <scope>NUCLEOTIDE SEQUENCE [LARGE SCALE GENOMIC DNA]</scope>
    <source>
        <strain>ATCC 51907 / DSM 11121 / KW20 / Rd</strain>
    </source>
</reference>
<name>RL1_HAEIN</name>
<organism>
    <name type="scientific">Haemophilus influenzae (strain ATCC 51907 / DSM 11121 / KW20 / Rd)</name>
    <dbReference type="NCBI Taxonomy" id="71421"/>
    <lineage>
        <taxon>Bacteria</taxon>
        <taxon>Pseudomonadati</taxon>
        <taxon>Pseudomonadota</taxon>
        <taxon>Gammaproteobacteria</taxon>
        <taxon>Pasteurellales</taxon>
        <taxon>Pasteurellaceae</taxon>
        <taxon>Haemophilus</taxon>
    </lineage>
</organism>
<gene>
    <name evidence="2" type="primary">rplA</name>
    <name evidence="2" type="synonym">rpl1</name>
    <name type="ordered locus">HI_0516</name>
</gene>
<evidence type="ECO:0000250" key="1"/>
<evidence type="ECO:0000255" key="2">
    <source>
        <dbReference type="HAMAP-Rule" id="MF_01318"/>
    </source>
</evidence>
<evidence type="ECO:0000305" key="3"/>